<accession>Q56888</accession>
<name>FLHE_YEREN</name>
<feature type="signal peptide" evidence="2">
    <location>
        <begin position="1"/>
        <end position="25"/>
    </location>
</feature>
<feature type="chain" id="PRO_0000009350" description="Flagellar protein FlhE">
    <location>
        <begin position="26"/>
        <end position="140"/>
    </location>
</feature>
<keyword id="KW-1005">Bacterial flagellum biogenesis</keyword>
<keyword id="KW-0732">Signal</keyword>
<protein>
    <recommendedName>
        <fullName>Flagellar protein FlhE</fullName>
    </recommendedName>
</protein>
<sequence length="140" mass="14878">MLTCLSRRVLVGLFSIGILPLNAMASGSWVADDIGITQSVRGVAISAKPLQSPVALAQDNARIVSISWRYQLMSAAPDGLQVKLCTPTRCMPLEGGSGLSRGLAGEAAATQLTFIYFIAGKGRVNPPLQVINHQVIVNYR</sequence>
<proteinExistence type="inferred from homology"/>
<gene>
    <name type="primary">flhE</name>
</gene>
<organism>
    <name type="scientific">Yersinia enterocolitica</name>
    <dbReference type="NCBI Taxonomy" id="630"/>
    <lineage>
        <taxon>Bacteria</taxon>
        <taxon>Pseudomonadati</taxon>
        <taxon>Pseudomonadota</taxon>
        <taxon>Gammaproteobacteria</taxon>
        <taxon>Enterobacterales</taxon>
        <taxon>Yersiniaceae</taxon>
        <taxon>Yersinia</taxon>
    </lineage>
</organism>
<reference key="1">
    <citation type="submission" date="1995-05" db="EMBL/GenBank/DDBJ databases">
        <authorList>
            <person name="Fauconnier A."/>
            <person name="Allaoui A."/>
            <person name="van Elsen A."/>
            <person name="Cornelis G."/>
            <person name="Bollen A."/>
        </authorList>
    </citation>
    <scope>NUCLEOTIDE SEQUENCE [GENOMIC DNA]</scope>
    <source>
        <strain>W1024 / Serotype O:9</strain>
    </source>
</reference>
<evidence type="ECO:0000250" key="1"/>
<evidence type="ECO:0000255" key="2"/>
<comment type="function">
    <text evidence="1">Not essential for flagellar formation and function.</text>
</comment>
<dbReference type="EMBL" id="Z48169">
    <property type="protein sequence ID" value="CAA88187.1"/>
    <property type="molecule type" value="Genomic_DNA"/>
</dbReference>
<dbReference type="PIR" id="S54215">
    <property type="entry name" value="S54215"/>
</dbReference>
<dbReference type="RefSeq" id="WP_005164470.1">
    <property type="nucleotide sequence ID" value="NZ_WJHZ01000004.1"/>
</dbReference>
<dbReference type="SMR" id="Q56888"/>
<dbReference type="STRING" id="1443113.LC20_02148"/>
<dbReference type="GO" id="GO:0044781">
    <property type="term" value="P:bacterial-type flagellum organization"/>
    <property type="evidence" value="ECO:0007669"/>
    <property type="project" value="UniProtKB-KW"/>
</dbReference>
<dbReference type="InterPro" id="IPR009420">
    <property type="entry name" value="FlhE"/>
</dbReference>
<dbReference type="Pfam" id="PF06366">
    <property type="entry name" value="FlhE"/>
    <property type="match status" value="1"/>
</dbReference>